<protein>
    <recommendedName>
        <fullName evidence="1">Tryptophan synthase alpha chain</fullName>
        <ecNumber evidence="1">4.2.1.20</ecNumber>
    </recommendedName>
</protein>
<evidence type="ECO:0000255" key="1">
    <source>
        <dbReference type="HAMAP-Rule" id="MF_00131"/>
    </source>
</evidence>
<accession>C4Z135</accession>
<dbReference type="EC" id="4.2.1.20" evidence="1"/>
<dbReference type="EMBL" id="CP001104">
    <property type="protein sequence ID" value="ACR72298.1"/>
    <property type="molecule type" value="Genomic_DNA"/>
</dbReference>
<dbReference type="RefSeq" id="WP_012739533.1">
    <property type="nucleotide sequence ID" value="NC_012778.1"/>
</dbReference>
<dbReference type="SMR" id="C4Z135"/>
<dbReference type="STRING" id="515620.EUBELI_01301"/>
<dbReference type="GeneID" id="41356016"/>
<dbReference type="KEGG" id="eel:EUBELI_01301"/>
<dbReference type="eggNOG" id="COG0159">
    <property type="taxonomic scope" value="Bacteria"/>
</dbReference>
<dbReference type="HOGENOM" id="CLU_016734_0_0_9"/>
<dbReference type="UniPathway" id="UPA00035">
    <property type="reaction ID" value="UER00044"/>
</dbReference>
<dbReference type="Proteomes" id="UP000001476">
    <property type="component" value="Chromosome"/>
</dbReference>
<dbReference type="GO" id="GO:0005829">
    <property type="term" value="C:cytosol"/>
    <property type="evidence" value="ECO:0007669"/>
    <property type="project" value="TreeGrafter"/>
</dbReference>
<dbReference type="GO" id="GO:0004834">
    <property type="term" value="F:tryptophan synthase activity"/>
    <property type="evidence" value="ECO:0007669"/>
    <property type="project" value="UniProtKB-UniRule"/>
</dbReference>
<dbReference type="CDD" id="cd04724">
    <property type="entry name" value="Tryptophan_synthase_alpha"/>
    <property type="match status" value="1"/>
</dbReference>
<dbReference type="FunFam" id="3.20.20.70:FF:000037">
    <property type="entry name" value="Tryptophan synthase alpha chain"/>
    <property type="match status" value="1"/>
</dbReference>
<dbReference type="Gene3D" id="3.20.20.70">
    <property type="entry name" value="Aldolase class I"/>
    <property type="match status" value="1"/>
</dbReference>
<dbReference type="HAMAP" id="MF_00131">
    <property type="entry name" value="Trp_synth_alpha"/>
    <property type="match status" value="1"/>
</dbReference>
<dbReference type="InterPro" id="IPR013785">
    <property type="entry name" value="Aldolase_TIM"/>
</dbReference>
<dbReference type="InterPro" id="IPR011060">
    <property type="entry name" value="RibuloseP-bd_barrel"/>
</dbReference>
<dbReference type="InterPro" id="IPR018204">
    <property type="entry name" value="Trp_synthase_alpha_AS"/>
</dbReference>
<dbReference type="InterPro" id="IPR002028">
    <property type="entry name" value="Trp_synthase_suA"/>
</dbReference>
<dbReference type="NCBIfam" id="TIGR00262">
    <property type="entry name" value="trpA"/>
    <property type="match status" value="1"/>
</dbReference>
<dbReference type="PANTHER" id="PTHR43406:SF1">
    <property type="entry name" value="TRYPTOPHAN SYNTHASE ALPHA CHAIN, CHLOROPLASTIC"/>
    <property type="match status" value="1"/>
</dbReference>
<dbReference type="PANTHER" id="PTHR43406">
    <property type="entry name" value="TRYPTOPHAN SYNTHASE, ALPHA CHAIN"/>
    <property type="match status" value="1"/>
</dbReference>
<dbReference type="Pfam" id="PF00290">
    <property type="entry name" value="Trp_syntA"/>
    <property type="match status" value="1"/>
</dbReference>
<dbReference type="SUPFAM" id="SSF51366">
    <property type="entry name" value="Ribulose-phoshate binding barrel"/>
    <property type="match status" value="1"/>
</dbReference>
<dbReference type="PROSITE" id="PS00167">
    <property type="entry name" value="TRP_SYNTHASE_ALPHA"/>
    <property type="match status" value="1"/>
</dbReference>
<gene>
    <name evidence="1" type="primary">trpA</name>
    <name type="ordered locus">EUBELI_01301</name>
</gene>
<reference key="1">
    <citation type="journal article" date="2009" name="Proc. Natl. Acad. Sci. U.S.A.">
        <title>Characterizing a model human gut microbiota composed of members of its two dominant bacterial phyla.</title>
        <authorList>
            <person name="Mahowald M.A."/>
            <person name="Rey F.E."/>
            <person name="Seedorf H."/>
            <person name="Turnbaugh P.J."/>
            <person name="Fulton R.S."/>
            <person name="Wollam A."/>
            <person name="Shah N."/>
            <person name="Wang C."/>
            <person name="Magrini V."/>
            <person name="Wilson R.K."/>
            <person name="Cantarel B.L."/>
            <person name="Coutinho P.M."/>
            <person name="Henrissat B."/>
            <person name="Crock L.W."/>
            <person name="Russell A."/>
            <person name="Verberkmoes N.C."/>
            <person name="Hettich R.L."/>
            <person name="Gordon J.I."/>
        </authorList>
    </citation>
    <scope>NUCLEOTIDE SEQUENCE [LARGE SCALE GENOMIC DNA]</scope>
    <source>
        <strain>ATCC 27750 / DSM 3376 / VPI C15-48 / C15-B4</strain>
    </source>
</reference>
<organism>
    <name type="scientific">Lachnospira eligens (strain ATCC 27750 / DSM 3376 / VPI C15-48 / C15-B4)</name>
    <name type="common">Eubacterium eligens</name>
    <dbReference type="NCBI Taxonomy" id="515620"/>
    <lineage>
        <taxon>Bacteria</taxon>
        <taxon>Bacillati</taxon>
        <taxon>Bacillota</taxon>
        <taxon>Clostridia</taxon>
        <taxon>Lachnospirales</taxon>
        <taxon>Lachnospiraceae</taxon>
        <taxon>Lachnospira</taxon>
    </lineage>
</organism>
<sequence length="264" mass="29044">MNRIEERLAALKEEGKKAFITYTTAGLPDYDTTKKIMFAQEKAGIDIMEIGVPFSDPIADGPVIQDASFKAIQNGASLEGIFTMMGKVRKAGLNSPVVFMLYYNTVYHYGVENFVNKCIENGVDGLIIPDLPFEEQGEIKDVLAKNEKSPILIQLVSPVSKGRIPMLLENARGFVYCVSQMGVTGKGANFHSQIREYLTEVKKESKIPVMMGFGIRTAADVAPLEDIIDGAIVGSHFIKLLEANNYSEEAATDYVATFKKELNA</sequence>
<comment type="function">
    <text evidence="1">The alpha subunit is responsible for the aldol cleavage of indoleglycerol phosphate to indole and glyceraldehyde 3-phosphate.</text>
</comment>
<comment type="catalytic activity">
    <reaction evidence="1">
        <text>(1S,2R)-1-C-(indol-3-yl)glycerol 3-phosphate + L-serine = D-glyceraldehyde 3-phosphate + L-tryptophan + H2O</text>
        <dbReference type="Rhea" id="RHEA:10532"/>
        <dbReference type="ChEBI" id="CHEBI:15377"/>
        <dbReference type="ChEBI" id="CHEBI:33384"/>
        <dbReference type="ChEBI" id="CHEBI:57912"/>
        <dbReference type="ChEBI" id="CHEBI:58866"/>
        <dbReference type="ChEBI" id="CHEBI:59776"/>
        <dbReference type="EC" id="4.2.1.20"/>
    </reaction>
</comment>
<comment type="pathway">
    <text evidence="1">Amino-acid biosynthesis; L-tryptophan biosynthesis; L-tryptophan from chorismate: step 5/5.</text>
</comment>
<comment type="subunit">
    <text evidence="1">Tetramer of two alpha and two beta chains.</text>
</comment>
<comment type="similarity">
    <text evidence="1">Belongs to the TrpA family.</text>
</comment>
<name>TRPA_LACE2</name>
<proteinExistence type="inferred from homology"/>
<feature type="chain" id="PRO_1000203182" description="Tryptophan synthase alpha chain">
    <location>
        <begin position="1"/>
        <end position="264"/>
    </location>
</feature>
<feature type="active site" description="Proton acceptor" evidence="1">
    <location>
        <position position="49"/>
    </location>
</feature>
<feature type="active site" description="Proton acceptor" evidence="1">
    <location>
        <position position="60"/>
    </location>
</feature>
<keyword id="KW-0028">Amino-acid biosynthesis</keyword>
<keyword id="KW-0057">Aromatic amino acid biosynthesis</keyword>
<keyword id="KW-0456">Lyase</keyword>
<keyword id="KW-1185">Reference proteome</keyword>
<keyword id="KW-0822">Tryptophan biosynthesis</keyword>